<dbReference type="EC" id="2.7.1.219" evidence="3"/>
<dbReference type="EMBL" id="BX640446">
    <property type="protein sequence ID" value="CAE33707.1"/>
    <property type="molecule type" value="Genomic_DNA"/>
</dbReference>
<dbReference type="RefSeq" id="WP_003810609.1">
    <property type="nucleotide sequence ID" value="NC_002927.3"/>
</dbReference>
<dbReference type="PDB" id="4XFR">
    <property type="method" value="X-ray"/>
    <property type="resolution" value="2.00 A"/>
    <property type="chains" value="A/B=1-405"/>
</dbReference>
<dbReference type="PDB" id="4XG0">
    <property type="method" value="X-ray"/>
    <property type="resolution" value="1.70 A"/>
    <property type="chains" value="A=1-405"/>
</dbReference>
<dbReference type="PDBsum" id="4XFR"/>
<dbReference type="PDBsum" id="4XG0"/>
<dbReference type="SMR" id="A0A0H3LX82"/>
<dbReference type="KEGG" id="bbr:BB3215"/>
<dbReference type="eggNOG" id="COG3395">
    <property type="taxonomic scope" value="Bacteria"/>
</dbReference>
<dbReference type="HOGENOM" id="CLU_029424_0_1_4"/>
<dbReference type="EvolutionaryTrace" id="A0A0H3LX82"/>
<dbReference type="Proteomes" id="UP000001027">
    <property type="component" value="Chromosome"/>
</dbReference>
<dbReference type="GO" id="GO:0005524">
    <property type="term" value="F:ATP binding"/>
    <property type="evidence" value="ECO:0007669"/>
    <property type="project" value="UniProtKB-KW"/>
</dbReference>
<dbReference type="GO" id="GO:0016301">
    <property type="term" value="F:kinase activity"/>
    <property type="evidence" value="ECO:0007669"/>
    <property type="project" value="UniProtKB-KW"/>
</dbReference>
<dbReference type="Gene3D" id="3.40.980.20">
    <property type="entry name" value="Four-carbon acid sugar kinase, nucleotide binding domain"/>
    <property type="match status" value="1"/>
</dbReference>
<dbReference type="Gene3D" id="3.40.50.10840">
    <property type="entry name" value="Putative sugar-binding, N-terminal domain"/>
    <property type="match status" value="1"/>
</dbReference>
<dbReference type="InterPro" id="IPR010737">
    <property type="entry name" value="4-carb_acid_sugar_kinase_N"/>
</dbReference>
<dbReference type="InterPro" id="IPR037051">
    <property type="entry name" value="4-carb_acid_sugar_kinase_N_sf"/>
</dbReference>
<dbReference type="InterPro" id="IPR031475">
    <property type="entry name" value="NBD_C"/>
</dbReference>
<dbReference type="InterPro" id="IPR042213">
    <property type="entry name" value="NBD_C_sf"/>
</dbReference>
<dbReference type="Pfam" id="PF17042">
    <property type="entry name" value="NBD_C"/>
    <property type="match status" value="1"/>
</dbReference>
<dbReference type="Pfam" id="PF07005">
    <property type="entry name" value="SBD_N"/>
    <property type="match status" value="1"/>
</dbReference>
<dbReference type="SUPFAM" id="SSF142764">
    <property type="entry name" value="YgbK-like"/>
    <property type="match status" value="1"/>
</dbReference>
<gene>
    <name evidence="4" type="primary">dtnK</name>
    <name evidence="6" type="ordered locus">BB3215</name>
</gene>
<keyword id="KW-0002">3D-structure</keyword>
<keyword id="KW-0067">ATP-binding</keyword>
<keyword id="KW-0119">Carbohydrate metabolism</keyword>
<keyword id="KW-0418">Kinase</keyword>
<keyword id="KW-0547">Nucleotide-binding</keyword>
<keyword id="KW-0808">Transferase</keyword>
<evidence type="ECO:0000250" key="1">
    <source>
        <dbReference type="UniProtKB" id="Q0KBC8"/>
    </source>
</evidence>
<evidence type="ECO:0000250" key="2">
    <source>
        <dbReference type="UniProtKB" id="Q6D0N7"/>
    </source>
</evidence>
<evidence type="ECO:0000269" key="3">
    <source>
    </source>
</evidence>
<evidence type="ECO:0000303" key="4">
    <source>
    </source>
</evidence>
<evidence type="ECO:0000305" key="5"/>
<evidence type="ECO:0000312" key="6">
    <source>
        <dbReference type="EMBL" id="CAE33707.1"/>
    </source>
</evidence>
<evidence type="ECO:0007744" key="7">
    <source>
        <dbReference type="PDB" id="4XFR"/>
    </source>
</evidence>
<evidence type="ECO:0007744" key="8">
    <source>
        <dbReference type="PDB" id="4XG0"/>
    </source>
</evidence>
<evidence type="ECO:0007829" key="9">
    <source>
        <dbReference type="PDB" id="4XG0"/>
    </source>
</evidence>
<organism>
    <name type="scientific">Bordetella bronchiseptica (strain ATCC BAA-588 / NCTC 13252 / RB50)</name>
    <name type="common">Alcaligenes bronchisepticus</name>
    <dbReference type="NCBI Taxonomy" id="257310"/>
    <lineage>
        <taxon>Bacteria</taxon>
        <taxon>Pseudomonadati</taxon>
        <taxon>Pseudomonadota</taxon>
        <taxon>Betaproteobacteria</taxon>
        <taxon>Burkholderiales</taxon>
        <taxon>Alcaligenaceae</taxon>
        <taxon>Bordetella</taxon>
    </lineage>
</organism>
<feature type="chain" id="PRO_0000439674" description="D-threonate kinase">
    <location>
        <begin position="1"/>
        <end position="405"/>
    </location>
</feature>
<feature type="binding site" evidence="2">
    <location>
        <position position="12"/>
    </location>
    <ligand>
        <name>substrate</name>
    </ligand>
</feature>
<feature type="binding site" evidence="2">
    <location>
        <position position="59"/>
    </location>
    <ligand>
        <name>substrate</name>
    </ligand>
</feature>
<feature type="binding site" evidence="2">
    <location>
        <begin position="88"/>
        <end position="91"/>
    </location>
    <ligand>
        <name>substrate</name>
    </ligand>
</feature>
<feature type="binding site" evidence="1">
    <location>
        <position position="243"/>
    </location>
    <ligand>
        <name>ATP</name>
        <dbReference type="ChEBI" id="CHEBI:30616"/>
    </ligand>
</feature>
<feature type="binding site" evidence="1">
    <location>
        <begin position="337"/>
        <end position="340"/>
    </location>
    <ligand>
        <name>ATP</name>
        <dbReference type="ChEBI" id="CHEBI:30616"/>
    </ligand>
</feature>
<feature type="binding site" evidence="1">
    <location>
        <position position="383"/>
    </location>
    <ligand>
        <name>ATP</name>
        <dbReference type="ChEBI" id="CHEBI:30616"/>
    </ligand>
</feature>
<feature type="strand" evidence="9">
    <location>
        <begin position="6"/>
        <end position="12"/>
    </location>
</feature>
<feature type="helix" evidence="9">
    <location>
        <begin position="13"/>
        <end position="25"/>
    </location>
</feature>
<feature type="strand" evidence="9">
    <location>
        <begin position="30"/>
        <end position="32"/>
    </location>
</feature>
<feature type="helix" evidence="9">
    <location>
        <begin position="37"/>
        <end position="42"/>
    </location>
</feature>
<feature type="helix" evidence="9">
    <location>
        <begin position="44"/>
        <end position="46"/>
    </location>
</feature>
<feature type="strand" evidence="9">
    <location>
        <begin position="50"/>
        <end position="55"/>
    </location>
</feature>
<feature type="helix" evidence="9">
    <location>
        <begin position="63"/>
        <end position="79"/>
    </location>
</feature>
<feature type="strand" evidence="9">
    <location>
        <begin position="84"/>
        <end position="88"/>
    </location>
</feature>
<feature type="helix" evidence="9">
    <location>
        <begin position="97"/>
        <end position="108"/>
    </location>
</feature>
<feature type="strand" evidence="9">
    <location>
        <begin position="113"/>
        <end position="117"/>
    </location>
</feature>
<feature type="helix" evidence="9">
    <location>
        <begin position="121"/>
        <end position="123"/>
    </location>
</feature>
<feature type="strand" evidence="9">
    <location>
        <begin position="125"/>
        <end position="128"/>
    </location>
</feature>
<feature type="strand" evidence="9">
    <location>
        <begin position="131"/>
        <end position="134"/>
    </location>
</feature>
<feature type="helix" evidence="9">
    <location>
        <begin position="139"/>
        <end position="141"/>
    </location>
</feature>
<feature type="helix" evidence="9">
    <location>
        <begin position="143"/>
        <end position="146"/>
    </location>
</feature>
<feature type="strand" evidence="9">
    <location>
        <begin position="148"/>
        <end position="150"/>
    </location>
</feature>
<feature type="helix" evidence="9">
    <location>
        <begin position="157"/>
        <end position="161"/>
    </location>
</feature>
<feature type="strand" evidence="9">
    <location>
        <begin position="164"/>
        <end position="166"/>
    </location>
</feature>
<feature type="helix" evidence="9">
    <location>
        <begin position="174"/>
        <end position="183"/>
    </location>
</feature>
<feature type="turn" evidence="9">
    <location>
        <begin position="184"/>
        <end position="186"/>
    </location>
</feature>
<feature type="strand" evidence="9">
    <location>
        <begin position="187"/>
        <end position="190"/>
    </location>
</feature>
<feature type="strand" evidence="9">
    <location>
        <begin position="192"/>
        <end position="194"/>
    </location>
</feature>
<feature type="helix" evidence="9">
    <location>
        <begin position="195"/>
        <end position="208"/>
    </location>
</feature>
<feature type="helix" evidence="9">
    <location>
        <begin position="209"/>
        <end position="211"/>
    </location>
</feature>
<feature type="strand" evidence="9">
    <location>
        <begin position="212"/>
        <end position="216"/>
    </location>
</feature>
<feature type="helix" evidence="9">
    <location>
        <begin position="218"/>
        <end position="230"/>
    </location>
</feature>
<feature type="strand" evidence="9">
    <location>
        <begin position="237"/>
        <end position="241"/>
    </location>
</feature>
<feature type="helix" evidence="9">
    <location>
        <begin position="246"/>
        <end position="257"/>
    </location>
</feature>
<feature type="strand" evidence="9">
    <location>
        <begin position="261"/>
        <end position="263"/>
    </location>
</feature>
<feature type="helix" evidence="9">
    <location>
        <begin position="267"/>
        <end position="270"/>
    </location>
</feature>
<feature type="helix" evidence="9">
    <location>
        <begin position="273"/>
        <end position="282"/>
    </location>
</feature>
<feature type="strand" evidence="9">
    <location>
        <begin position="295"/>
        <end position="299"/>
    </location>
</feature>
<feature type="helix" evidence="9">
    <location>
        <begin position="312"/>
        <end position="327"/>
    </location>
</feature>
<feature type="strand" evidence="9">
    <location>
        <begin position="331"/>
        <end position="337"/>
    </location>
</feature>
<feature type="helix" evidence="9">
    <location>
        <begin position="338"/>
        <end position="347"/>
    </location>
</feature>
<feature type="strand" evidence="9">
    <location>
        <begin position="352"/>
        <end position="360"/>
    </location>
</feature>
<feature type="strand" evidence="9">
    <location>
        <begin position="363"/>
        <end position="371"/>
    </location>
</feature>
<feature type="turn" evidence="9">
    <location>
        <begin position="372"/>
        <end position="375"/>
    </location>
</feature>
<feature type="strand" evidence="9">
    <location>
        <begin position="377"/>
        <end position="381"/>
    </location>
</feature>
<feature type="helix" evidence="9">
    <location>
        <begin position="390"/>
        <end position="399"/>
    </location>
</feature>
<name>DTNK_BORBR</name>
<comment type="function">
    <text evidence="3">Catalyzes the ATP-dependent phosphorylation of D-threonate to D-threonate 4-phosphate. Can also phosphorylate 4-hydroxy-L-threonine, with lower efficiency.</text>
</comment>
<comment type="catalytic activity">
    <reaction evidence="3">
        <text>D-threonate + ATP = 4-O-phospho-D-threonate + ADP + H(+)</text>
        <dbReference type="Rhea" id="RHEA:52388"/>
        <dbReference type="ChEBI" id="CHEBI:15378"/>
        <dbReference type="ChEBI" id="CHEBI:30616"/>
        <dbReference type="ChEBI" id="CHEBI:45912"/>
        <dbReference type="ChEBI" id="CHEBI:136590"/>
        <dbReference type="ChEBI" id="CHEBI:456216"/>
        <dbReference type="EC" id="2.7.1.219"/>
    </reaction>
</comment>
<comment type="biophysicochemical properties">
    <kinetics>
        <KM evidence="3">0.16 mM for D-threonate</KM>
        <KM evidence="3">33 mM for 4-hydroxy-L-threonine</KM>
        <text evidence="3">kcat is 41 sec(-1) with D-threonate as substrate. kcat is 28 sec(-1) with 4-hydroxy-L-threonine as substrate.</text>
    </kinetics>
</comment>
<comment type="similarity">
    <text evidence="5">Belongs to the four-carbon acid sugar kinase family.</text>
</comment>
<proteinExistence type="evidence at protein level"/>
<accession>A0A0H3LX82</accession>
<protein>
    <recommendedName>
        <fullName evidence="4">D-threonate kinase</fullName>
        <ecNumber evidence="3">2.7.1.219</ecNumber>
    </recommendedName>
</protein>
<reference key="1">
    <citation type="journal article" date="2003" name="Nat. Genet.">
        <title>Comparative analysis of the genome sequences of Bordetella pertussis, Bordetella parapertussis and Bordetella bronchiseptica.</title>
        <authorList>
            <person name="Parkhill J."/>
            <person name="Sebaihia M."/>
            <person name="Preston A."/>
            <person name="Murphy L.D."/>
            <person name="Thomson N.R."/>
            <person name="Harris D.E."/>
            <person name="Holden M.T.G."/>
            <person name="Churcher C.M."/>
            <person name="Bentley S.D."/>
            <person name="Mungall K.L."/>
            <person name="Cerdeno-Tarraga A.-M."/>
            <person name="Temple L."/>
            <person name="James K.D."/>
            <person name="Harris B."/>
            <person name="Quail M.A."/>
            <person name="Achtman M."/>
            <person name="Atkin R."/>
            <person name="Baker S."/>
            <person name="Basham D."/>
            <person name="Bason N."/>
            <person name="Cherevach I."/>
            <person name="Chillingworth T."/>
            <person name="Collins M."/>
            <person name="Cronin A."/>
            <person name="Davis P."/>
            <person name="Doggett J."/>
            <person name="Feltwell T."/>
            <person name="Goble A."/>
            <person name="Hamlin N."/>
            <person name="Hauser H."/>
            <person name="Holroyd S."/>
            <person name="Jagels K."/>
            <person name="Leather S."/>
            <person name="Moule S."/>
            <person name="Norberczak H."/>
            <person name="O'Neil S."/>
            <person name="Ormond D."/>
            <person name="Price C."/>
            <person name="Rabbinowitsch E."/>
            <person name="Rutter S."/>
            <person name="Sanders M."/>
            <person name="Saunders D."/>
            <person name="Seeger K."/>
            <person name="Sharp S."/>
            <person name="Simmonds M."/>
            <person name="Skelton J."/>
            <person name="Squares R."/>
            <person name="Squares S."/>
            <person name="Stevens K."/>
            <person name="Unwin L."/>
            <person name="Whitehead S."/>
            <person name="Barrell B.G."/>
            <person name="Maskell D.J."/>
        </authorList>
    </citation>
    <scope>NUCLEOTIDE SEQUENCE [LARGE SCALE GENOMIC DNA]</scope>
    <source>
        <strain>ATCC BAA-588 / NCTC 13252 / RB50</strain>
    </source>
</reference>
<reference evidence="7 8" key="2">
    <citation type="journal article" date="2016" name="Proc. Natl. Acad. Sci. U.S.A.">
        <title>Assignment of function to a domain of unknown function: DUF1537 is a new kinase family in catabolic pathways for acid sugars.</title>
        <authorList>
            <person name="Zhang X."/>
            <person name="Carter M.S."/>
            <person name="Vetting M.W."/>
            <person name="San Francisco B."/>
            <person name="Zhao S."/>
            <person name="Al-Obaidi N.F."/>
            <person name="Solbiati J.O."/>
            <person name="Thiaville J.J."/>
            <person name="de Crecy-Lagard V."/>
            <person name="Jacobson M.P."/>
            <person name="Almo S.C."/>
            <person name="Gerlt J.A."/>
        </authorList>
    </citation>
    <scope>X-RAY CRYSTALLOGRAPHY (1.70 ANGSTROMS)</scope>
    <scope>FUNCTION</scope>
    <scope>CATALYTIC ACTIVITY</scope>
    <scope>BIOPHYSICOCHEMICAL PROPERTIES</scope>
    <source>
        <strain>ATCC BAA-588 / NCTC 13252 / RB50</strain>
    </source>
</reference>
<sequence>MGGPYIGIVADDLTGSGDTAVQFVRAGWATQLSVGGAEQALADPAVRQAEVLAVTTHSRPLAAADAAAVVRGEVERLRAAGVQRLYKKVDSTLRGAFKAEIDAARLAWGEDAIAVVCPAFPVTGRTVRQGVLYVGDRPVTETSAATDPVTPVTESHIPTLLGCAQLAAQAGETPAELARRIAAAAPVVVVDALDDADVQRLARAIGVLGQRAVPVGSGGLAAPLARVWAGGQAAGPVLVVVTSQHSAARQQAAALQQAGARTWAPTLAQLADDRNWAAWTAEVEAAEHGMPAVDALMLLAPEGRLAGLDADSVARRLGELAARLVLAHGAAGVVATGGDGASAVLAALQASGIALVDEVTGGVPLGTLTGGQAAGLPVVTKAGGFGEQDVLIRAAQAIRERRFTK</sequence>